<proteinExistence type="inferred from homology"/>
<name>RIMM_FINM2</name>
<evidence type="ECO:0000255" key="1">
    <source>
        <dbReference type="HAMAP-Rule" id="MF_00014"/>
    </source>
</evidence>
<evidence type="ECO:0000305" key="2"/>
<organism>
    <name type="scientific">Finegoldia magna (strain ATCC 29328 / DSM 20472 / WAL 2508)</name>
    <name type="common">Peptostreptococcus magnus</name>
    <dbReference type="NCBI Taxonomy" id="334413"/>
    <lineage>
        <taxon>Bacteria</taxon>
        <taxon>Bacillati</taxon>
        <taxon>Bacillota</taxon>
        <taxon>Tissierellia</taxon>
        <taxon>Tissierellales</taxon>
        <taxon>Peptoniphilaceae</taxon>
        <taxon>Finegoldia</taxon>
    </lineage>
</organism>
<accession>B0S046</accession>
<comment type="function">
    <text evidence="1">An accessory protein needed during the final step in the assembly of 30S ribosomal subunit, possibly for assembly of the head region. Essential for efficient processing of 16S rRNA. May be needed both before and after RbfA during the maturation of 16S rRNA. It has affinity for free ribosomal 30S subunits but not for 70S ribosomes.</text>
</comment>
<comment type="subunit">
    <text evidence="1">Binds ribosomal protein uS19.</text>
</comment>
<comment type="subcellular location">
    <subcellularLocation>
        <location evidence="1">Cytoplasm</location>
    </subcellularLocation>
</comment>
<comment type="domain">
    <text evidence="1">The PRC barrel domain binds ribosomal protein uS19.</text>
</comment>
<comment type="similarity">
    <text evidence="1">Belongs to the RimM family.</text>
</comment>
<comment type="sequence caution" evidence="2">
    <conflict type="erroneous initiation">
        <sequence resource="EMBL-CDS" id="BAG07946"/>
    </conflict>
</comment>
<reference key="1">
    <citation type="journal article" date="2008" name="DNA Res.">
        <title>Complete genome sequence of Finegoldia magna, an anaerobic opportunistic pathogen.</title>
        <authorList>
            <person name="Goto T."/>
            <person name="Yamashita A."/>
            <person name="Hirakawa H."/>
            <person name="Matsutani M."/>
            <person name="Todo K."/>
            <person name="Ohshima K."/>
            <person name="Toh H."/>
            <person name="Miyamoto K."/>
            <person name="Kuhara S."/>
            <person name="Hattori M."/>
            <person name="Shimizu T."/>
            <person name="Akimoto S."/>
        </authorList>
    </citation>
    <scope>NUCLEOTIDE SEQUENCE [LARGE SCALE GENOMIC DNA]</scope>
    <source>
        <strain>ATCC 29328 / DSM 20472 / WAL 2508</strain>
    </source>
</reference>
<keyword id="KW-0143">Chaperone</keyword>
<keyword id="KW-0963">Cytoplasm</keyword>
<keyword id="KW-1185">Reference proteome</keyword>
<keyword id="KW-0690">Ribosome biogenesis</keyword>
<keyword id="KW-0698">rRNA processing</keyword>
<sequence>MEYIAVAEVLNTHGIKGCLKMRPLTDNIERFDEDICYYLGDKKVKVTIQNYRMYKGFLYIDFEEFNDINEVLGFKKQYLYIDEKDRYELKDGSFYIDDLIGLKAYFNGEYIGDLVDVISIYSNDVYVIKNDEKEFMIPAVKEFIKKIDLENGLIDVVIIEGM</sequence>
<dbReference type="EMBL" id="AP008971">
    <property type="protein sequence ID" value="BAG07946.1"/>
    <property type="status" value="ALT_INIT"/>
    <property type="molecule type" value="Genomic_DNA"/>
</dbReference>
<dbReference type="RefSeq" id="WP_002838613.1">
    <property type="nucleotide sequence ID" value="NC_010376.1"/>
</dbReference>
<dbReference type="SMR" id="B0S046"/>
<dbReference type="STRING" id="334413.FMG_0528"/>
<dbReference type="KEGG" id="fma:FMG_0528"/>
<dbReference type="eggNOG" id="COG0806">
    <property type="taxonomic scope" value="Bacteria"/>
</dbReference>
<dbReference type="HOGENOM" id="CLU_077636_3_2_9"/>
<dbReference type="Proteomes" id="UP000001319">
    <property type="component" value="Chromosome"/>
</dbReference>
<dbReference type="GO" id="GO:0005737">
    <property type="term" value="C:cytoplasm"/>
    <property type="evidence" value="ECO:0007669"/>
    <property type="project" value="UniProtKB-SubCell"/>
</dbReference>
<dbReference type="GO" id="GO:0005840">
    <property type="term" value="C:ribosome"/>
    <property type="evidence" value="ECO:0007669"/>
    <property type="project" value="InterPro"/>
</dbReference>
<dbReference type="GO" id="GO:0043022">
    <property type="term" value="F:ribosome binding"/>
    <property type="evidence" value="ECO:0007669"/>
    <property type="project" value="InterPro"/>
</dbReference>
<dbReference type="GO" id="GO:0042274">
    <property type="term" value="P:ribosomal small subunit biogenesis"/>
    <property type="evidence" value="ECO:0007669"/>
    <property type="project" value="UniProtKB-UniRule"/>
</dbReference>
<dbReference type="GO" id="GO:0006364">
    <property type="term" value="P:rRNA processing"/>
    <property type="evidence" value="ECO:0007669"/>
    <property type="project" value="UniProtKB-UniRule"/>
</dbReference>
<dbReference type="Gene3D" id="2.30.30.240">
    <property type="entry name" value="PRC-barrel domain"/>
    <property type="match status" value="1"/>
</dbReference>
<dbReference type="Gene3D" id="2.40.30.60">
    <property type="entry name" value="RimM"/>
    <property type="match status" value="1"/>
</dbReference>
<dbReference type="HAMAP" id="MF_00014">
    <property type="entry name" value="Ribosome_mat_RimM"/>
    <property type="match status" value="1"/>
</dbReference>
<dbReference type="InterPro" id="IPR011033">
    <property type="entry name" value="PRC_barrel-like_sf"/>
</dbReference>
<dbReference type="InterPro" id="IPR056792">
    <property type="entry name" value="PRC_RimM"/>
</dbReference>
<dbReference type="InterPro" id="IPR011961">
    <property type="entry name" value="RimM"/>
</dbReference>
<dbReference type="InterPro" id="IPR002676">
    <property type="entry name" value="RimM_N"/>
</dbReference>
<dbReference type="InterPro" id="IPR036976">
    <property type="entry name" value="RimM_N_sf"/>
</dbReference>
<dbReference type="InterPro" id="IPR009000">
    <property type="entry name" value="Transl_B-barrel_sf"/>
</dbReference>
<dbReference type="NCBIfam" id="TIGR02273">
    <property type="entry name" value="16S_RimM"/>
    <property type="match status" value="1"/>
</dbReference>
<dbReference type="PANTHER" id="PTHR33692">
    <property type="entry name" value="RIBOSOME MATURATION FACTOR RIMM"/>
    <property type="match status" value="1"/>
</dbReference>
<dbReference type="PANTHER" id="PTHR33692:SF1">
    <property type="entry name" value="RIBOSOME MATURATION FACTOR RIMM"/>
    <property type="match status" value="1"/>
</dbReference>
<dbReference type="Pfam" id="PF24986">
    <property type="entry name" value="PRC_RimM"/>
    <property type="match status" value="1"/>
</dbReference>
<dbReference type="Pfam" id="PF01782">
    <property type="entry name" value="RimM"/>
    <property type="match status" value="1"/>
</dbReference>
<dbReference type="SUPFAM" id="SSF50346">
    <property type="entry name" value="PRC-barrel domain"/>
    <property type="match status" value="1"/>
</dbReference>
<dbReference type="SUPFAM" id="SSF50447">
    <property type="entry name" value="Translation proteins"/>
    <property type="match status" value="1"/>
</dbReference>
<gene>
    <name evidence="1" type="primary">rimM</name>
    <name type="ordered locus">FMG_0528</name>
</gene>
<feature type="chain" id="PRO_0000351758" description="Ribosome maturation factor RimM">
    <location>
        <begin position="1"/>
        <end position="162"/>
    </location>
</feature>
<feature type="domain" description="PRC barrel" evidence="1">
    <location>
        <begin position="91"/>
        <end position="162"/>
    </location>
</feature>
<protein>
    <recommendedName>
        <fullName evidence="1">Ribosome maturation factor RimM</fullName>
    </recommendedName>
</protein>